<comment type="function">
    <text evidence="1">Catalyzes the isomerization between 2-isopropylmalate and 3-isopropylmalate, via the formation of 2-isopropylmaleate.</text>
</comment>
<comment type="catalytic activity">
    <reaction evidence="1">
        <text>(2R,3S)-3-isopropylmalate = (2S)-2-isopropylmalate</text>
        <dbReference type="Rhea" id="RHEA:32287"/>
        <dbReference type="ChEBI" id="CHEBI:1178"/>
        <dbReference type="ChEBI" id="CHEBI:35121"/>
        <dbReference type="EC" id="4.2.1.33"/>
    </reaction>
</comment>
<comment type="pathway">
    <text evidence="1">Amino-acid biosynthesis; L-leucine biosynthesis; L-leucine from 3-methyl-2-oxobutanoate: step 2/4.</text>
</comment>
<comment type="subunit">
    <text evidence="1">Heterodimer of LeuC and LeuD.</text>
</comment>
<comment type="similarity">
    <text evidence="1">Belongs to the LeuD family. LeuD type 1 subfamily.</text>
</comment>
<reference key="1">
    <citation type="submission" date="2008-01" db="EMBL/GenBank/DDBJ databases">
        <title>Complete sequence of Pseudomonas putida GB-1.</title>
        <authorList>
            <consortium name="US DOE Joint Genome Institute"/>
            <person name="Copeland A."/>
            <person name="Lucas S."/>
            <person name="Lapidus A."/>
            <person name="Barry K."/>
            <person name="Glavina del Rio T."/>
            <person name="Dalin E."/>
            <person name="Tice H."/>
            <person name="Pitluck S."/>
            <person name="Bruce D."/>
            <person name="Goodwin L."/>
            <person name="Chertkov O."/>
            <person name="Brettin T."/>
            <person name="Detter J.C."/>
            <person name="Han C."/>
            <person name="Kuske C.R."/>
            <person name="Schmutz J."/>
            <person name="Larimer F."/>
            <person name="Land M."/>
            <person name="Hauser L."/>
            <person name="Kyrpides N."/>
            <person name="Kim E."/>
            <person name="McCarthy J.K."/>
            <person name="Richardson P."/>
        </authorList>
    </citation>
    <scope>NUCLEOTIDE SEQUENCE [LARGE SCALE GENOMIC DNA]</scope>
    <source>
        <strain>GB-1</strain>
    </source>
</reference>
<evidence type="ECO:0000255" key="1">
    <source>
        <dbReference type="HAMAP-Rule" id="MF_01031"/>
    </source>
</evidence>
<name>LEUD_PSEPG</name>
<accession>B0KF82</accession>
<feature type="chain" id="PRO_1000084260" description="3-isopropylmalate dehydratase small subunit">
    <location>
        <begin position="1"/>
        <end position="214"/>
    </location>
</feature>
<organism>
    <name type="scientific">Pseudomonas putida (strain GB-1)</name>
    <dbReference type="NCBI Taxonomy" id="76869"/>
    <lineage>
        <taxon>Bacteria</taxon>
        <taxon>Pseudomonadati</taxon>
        <taxon>Pseudomonadota</taxon>
        <taxon>Gammaproteobacteria</taxon>
        <taxon>Pseudomonadales</taxon>
        <taxon>Pseudomonadaceae</taxon>
        <taxon>Pseudomonas</taxon>
    </lineage>
</organism>
<keyword id="KW-0028">Amino-acid biosynthesis</keyword>
<keyword id="KW-0100">Branched-chain amino acid biosynthesis</keyword>
<keyword id="KW-0432">Leucine biosynthesis</keyword>
<keyword id="KW-0456">Lyase</keyword>
<gene>
    <name evidence="1" type="primary">leuD</name>
    <name type="ordered locus">PputGB1_1517</name>
</gene>
<protein>
    <recommendedName>
        <fullName evidence="1">3-isopropylmalate dehydratase small subunit</fullName>
        <ecNumber evidence="1">4.2.1.33</ecNumber>
    </recommendedName>
    <alternativeName>
        <fullName evidence="1">Alpha-IPM isomerase</fullName>
        <shortName evidence="1">IPMI</shortName>
    </alternativeName>
    <alternativeName>
        <fullName evidence="1">Isopropylmalate isomerase</fullName>
    </alternativeName>
</protein>
<sequence length="214" mass="24225">MKAFTQHTGLVAPLDRANVDTDQIIPKQFLKSIKRTGFGPNLFDEWRYLDVGQPYQDNSKRPVNQEFVLNHARYQGASVLLARENFGCGSSREHAPWALDEYGFRSIIAPSFADIFFNNSFKNGLLPIILSDEEVDELFKQVEANPGYQLTIDLQAQAVTRPDGKVLHFEIDAFRKHCLLNGLDDIGLTLQDSDAIKAFEGKHRAGQPWLFRDA</sequence>
<dbReference type="EC" id="4.2.1.33" evidence="1"/>
<dbReference type="EMBL" id="CP000926">
    <property type="protein sequence ID" value="ABY97422.1"/>
    <property type="molecule type" value="Genomic_DNA"/>
</dbReference>
<dbReference type="RefSeq" id="WP_012271189.1">
    <property type="nucleotide sequence ID" value="NC_010322.1"/>
</dbReference>
<dbReference type="SMR" id="B0KF82"/>
<dbReference type="KEGG" id="ppg:PputGB1_1517"/>
<dbReference type="eggNOG" id="COG0066">
    <property type="taxonomic scope" value="Bacteria"/>
</dbReference>
<dbReference type="HOGENOM" id="CLU_081378_0_3_6"/>
<dbReference type="UniPathway" id="UPA00048">
    <property type="reaction ID" value="UER00071"/>
</dbReference>
<dbReference type="Proteomes" id="UP000002157">
    <property type="component" value="Chromosome"/>
</dbReference>
<dbReference type="GO" id="GO:0009316">
    <property type="term" value="C:3-isopropylmalate dehydratase complex"/>
    <property type="evidence" value="ECO:0007669"/>
    <property type="project" value="InterPro"/>
</dbReference>
<dbReference type="GO" id="GO:0003861">
    <property type="term" value="F:3-isopropylmalate dehydratase activity"/>
    <property type="evidence" value="ECO:0007669"/>
    <property type="project" value="UniProtKB-UniRule"/>
</dbReference>
<dbReference type="GO" id="GO:0009098">
    <property type="term" value="P:L-leucine biosynthetic process"/>
    <property type="evidence" value="ECO:0007669"/>
    <property type="project" value="UniProtKB-UniRule"/>
</dbReference>
<dbReference type="CDD" id="cd01577">
    <property type="entry name" value="IPMI_Swivel"/>
    <property type="match status" value="1"/>
</dbReference>
<dbReference type="FunFam" id="3.20.19.10:FF:000003">
    <property type="entry name" value="3-isopropylmalate dehydratase small subunit"/>
    <property type="match status" value="1"/>
</dbReference>
<dbReference type="Gene3D" id="3.20.19.10">
    <property type="entry name" value="Aconitase, domain 4"/>
    <property type="match status" value="1"/>
</dbReference>
<dbReference type="HAMAP" id="MF_01031">
    <property type="entry name" value="LeuD_type1"/>
    <property type="match status" value="1"/>
</dbReference>
<dbReference type="InterPro" id="IPR004431">
    <property type="entry name" value="3-IsopropMal_deHydase_ssu"/>
</dbReference>
<dbReference type="InterPro" id="IPR015928">
    <property type="entry name" value="Aconitase/3IPM_dehydase_swvl"/>
</dbReference>
<dbReference type="InterPro" id="IPR000573">
    <property type="entry name" value="AconitaseA/IPMdHydase_ssu_swvl"/>
</dbReference>
<dbReference type="InterPro" id="IPR033940">
    <property type="entry name" value="IPMI_Swivel"/>
</dbReference>
<dbReference type="InterPro" id="IPR050075">
    <property type="entry name" value="LeuD"/>
</dbReference>
<dbReference type="NCBIfam" id="TIGR00171">
    <property type="entry name" value="leuD"/>
    <property type="match status" value="1"/>
</dbReference>
<dbReference type="NCBIfam" id="NF002458">
    <property type="entry name" value="PRK01641.1"/>
    <property type="match status" value="1"/>
</dbReference>
<dbReference type="PANTHER" id="PTHR43345:SF5">
    <property type="entry name" value="3-ISOPROPYLMALATE DEHYDRATASE SMALL SUBUNIT"/>
    <property type="match status" value="1"/>
</dbReference>
<dbReference type="PANTHER" id="PTHR43345">
    <property type="entry name" value="3-ISOPROPYLMALATE DEHYDRATASE SMALL SUBUNIT 2-RELATED-RELATED"/>
    <property type="match status" value="1"/>
</dbReference>
<dbReference type="Pfam" id="PF00694">
    <property type="entry name" value="Aconitase_C"/>
    <property type="match status" value="1"/>
</dbReference>
<dbReference type="SUPFAM" id="SSF52016">
    <property type="entry name" value="LeuD/IlvD-like"/>
    <property type="match status" value="1"/>
</dbReference>
<proteinExistence type="inferred from homology"/>